<name>ACBD5_RAT</name>
<protein>
    <recommendedName>
        <fullName>Acyl-CoA-binding domain-containing protein 5</fullName>
    </recommendedName>
</protein>
<reference key="1">
    <citation type="submission" date="2006-09" db="EMBL/GenBank/DDBJ databases">
        <title>Quantitative MS of peroxisomes after fibrate treatment: from proteome acquisition to new aspects of cell biological function.</title>
        <authorList>
            <person name="Islinger M."/>
            <person name="Lueers G.H."/>
            <person name="Li K.W."/>
            <person name="Loos M."/>
            <person name="Voelkl A."/>
        </authorList>
    </citation>
    <scope>NUCLEOTIDE SEQUENCE [MRNA] (ISOFORMS 1 AND 2)</scope>
    <source>
        <strain>Sprague-Dawley</strain>
    </source>
</reference>
<reference key="2">
    <citation type="journal article" date="2004" name="Genome Res.">
        <title>The status, quality, and expansion of the NIH full-length cDNA project: the Mammalian Gene Collection (MGC).</title>
        <authorList>
            <consortium name="The MGC Project Team"/>
        </authorList>
    </citation>
    <scope>NUCLEOTIDE SEQUENCE [LARGE SCALE MRNA] (ISOFORM 3)</scope>
    <source>
        <tissue>Prostate</tissue>
    </source>
</reference>
<reference key="3">
    <citation type="submission" date="2007-09" db="UniProtKB">
        <authorList>
            <person name="Lubec G."/>
            <person name="Kang S.U."/>
            <person name="Lubec S."/>
        </authorList>
    </citation>
    <scope>PROTEIN SEQUENCE OF 202-212</scope>
    <scope>IDENTIFICATION BY MASS SPECTROMETRY</scope>
    <source>
        <strain>Sprague-Dawley</strain>
        <tissue>Brain</tissue>
    </source>
</reference>
<reference key="4">
    <citation type="journal article" date="2012" name="Nat. Commun.">
        <title>Quantitative maps of protein phosphorylation sites across 14 different rat organs and tissues.</title>
        <authorList>
            <person name="Lundby A."/>
            <person name="Secher A."/>
            <person name="Lage K."/>
            <person name="Nordsborg N.B."/>
            <person name="Dmytriyev A."/>
            <person name="Lundby C."/>
            <person name="Olsen J.V."/>
        </authorList>
    </citation>
    <scope>PHOSPHORYLATION [LARGE SCALE ANALYSIS] AT SER-184; SER-185; SER-187 AND SER-191</scope>
    <scope>IDENTIFICATION BY MASS SPECTROMETRY [LARGE SCALE ANALYSIS]</scope>
</reference>
<sequence length="506" mass="56782">MLFLSFYAGSWESWICCCCVIPVDRPWDRGRRWQLEMADTRSVYETRFEAAVKVIQSLPKNGSFQPTNEMMLRFYSFYKQATEGPCKLSRPGFWDPIGRYKWDAWSSLGDMTKEEAMIAYVEEMKKIIETMPMTEKVEELLHVIGPFYEIVEDKKNSKSSDLTSDLGNVLTSSNAKAVNGKAESSDSGAESEEEEAQEELKGAEQSGSDDKKMMTKSTDKNLEIIVTNGYKDSFAQDSDIHTDSSRSARRSEDKKPTDQSSQQTGNTVLCVHQDTNEDPGEDASGVHHLTSDSDSEVYCDSMEQFGQEEYYLGGDPAQHLEGSGFCEDAQLSPGNGSIGKMQMRAVKGKGEVKHGGEDGRSSSGTPHREKRGGESEDISGVRRGRGHRMPHLSEGTKGRQVGSGGDGERWGSDRGSRGSLNEQIALVLIRLQEDMQNVLQRLHKLETLTASQAKLSWQTSNQPSSQRPSWWPFEMSPGALAFAIIWPFIAQWLVHLYYQRRRRKLN</sequence>
<feature type="chain" id="PRO_0000287380" description="Acyl-CoA-binding domain-containing protein 5">
    <location>
        <begin position="1"/>
        <end position="506"/>
    </location>
</feature>
<feature type="transmembrane region" description="Helical" evidence="4">
    <location>
        <begin position="478"/>
        <end position="498"/>
    </location>
</feature>
<feature type="domain" description="ACB" evidence="5">
    <location>
        <begin position="44"/>
        <end position="133"/>
    </location>
</feature>
<feature type="region of interest" description="Disordered" evidence="6">
    <location>
        <begin position="175"/>
        <end position="217"/>
    </location>
</feature>
<feature type="region of interest" description="Disordered" evidence="6">
    <location>
        <begin position="234"/>
        <end position="302"/>
    </location>
</feature>
<feature type="region of interest" description="Disordered" evidence="6">
    <location>
        <begin position="345"/>
        <end position="417"/>
    </location>
</feature>
<feature type="coiled-coil region" evidence="4">
    <location>
        <begin position="181"/>
        <end position="209"/>
    </location>
</feature>
<feature type="coiled-coil region" evidence="4">
    <location>
        <begin position="426"/>
        <end position="451"/>
    </location>
</feature>
<feature type="compositionally biased region" description="Basic and acidic residues" evidence="6">
    <location>
        <begin position="198"/>
        <end position="217"/>
    </location>
</feature>
<feature type="compositionally biased region" description="Basic and acidic residues" evidence="6">
    <location>
        <begin position="238"/>
        <end position="257"/>
    </location>
</feature>
<feature type="compositionally biased region" description="Polar residues" evidence="6">
    <location>
        <begin position="258"/>
        <end position="267"/>
    </location>
</feature>
<feature type="compositionally biased region" description="Basic and acidic residues" evidence="6">
    <location>
        <begin position="348"/>
        <end position="360"/>
    </location>
</feature>
<feature type="compositionally biased region" description="Basic and acidic residues" evidence="6">
    <location>
        <begin position="406"/>
        <end position="416"/>
    </location>
</feature>
<feature type="binding site" evidence="1">
    <location>
        <begin position="55"/>
        <end position="64"/>
    </location>
    <ligand>
        <name>an acyl-CoA</name>
        <dbReference type="ChEBI" id="CHEBI:58342"/>
    </ligand>
</feature>
<feature type="binding site" evidence="1">
    <location>
        <begin position="75"/>
        <end position="79"/>
    </location>
    <ligand>
        <name>an acyl-CoA</name>
        <dbReference type="ChEBI" id="CHEBI:58342"/>
    </ligand>
</feature>
<feature type="binding site" evidence="1">
    <location>
        <position position="101"/>
    </location>
    <ligand>
        <name>an acyl-CoA</name>
        <dbReference type="ChEBI" id="CHEBI:58342"/>
    </ligand>
</feature>
<feature type="binding site" evidence="1">
    <location>
        <position position="120"/>
    </location>
    <ligand>
        <name>an acyl-CoA</name>
        <dbReference type="ChEBI" id="CHEBI:58342"/>
    </ligand>
</feature>
<feature type="modified residue" description="Phosphoserine" evidence="10">
    <location>
        <position position="184"/>
    </location>
</feature>
<feature type="modified residue" description="Phosphoserine" evidence="10">
    <location>
        <position position="185"/>
    </location>
</feature>
<feature type="modified residue" description="Phosphoserine" evidence="10">
    <location>
        <position position="187"/>
    </location>
</feature>
<feature type="modified residue" description="Phosphoserine" evidence="10">
    <location>
        <position position="191"/>
    </location>
</feature>
<feature type="modified residue" description="Phosphoserine" evidence="2">
    <location>
        <position position="206"/>
    </location>
</feature>
<feature type="modified residue" description="Phosphoserine" evidence="3">
    <location>
        <position position="233"/>
    </location>
</feature>
<feature type="modified residue" description="Phosphoserine" evidence="2">
    <location>
        <position position="301"/>
    </location>
</feature>
<feature type="modified residue" description="Phosphoserine" evidence="2">
    <location>
        <position position="403"/>
    </location>
</feature>
<feature type="modified residue" description="N6-acetyllysine" evidence="3">
    <location>
        <position position="444"/>
    </location>
</feature>
<feature type="splice variant" id="VSP_025454" description="In isoform 2." evidence="8">
    <location>
        <begin position="1"/>
        <end position="36"/>
    </location>
</feature>
<feature type="splice variant" id="VSP_025455" description="In isoform 2 and isoform 3." evidence="7 8">
    <original>R</original>
    <variation>RV</variation>
    <location>
        <position position="385"/>
    </location>
</feature>
<keyword id="KW-0007">Acetylation</keyword>
<keyword id="KW-0025">Alternative splicing</keyword>
<keyword id="KW-0072">Autophagy</keyword>
<keyword id="KW-0175">Coiled coil</keyword>
<keyword id="KW-0903">Direct protein sequencing</keyword>
<keyword id="KW-0446">Lipid-binding</keyword>
<keyword id="KW-0472">Membrane</keyword>
<keyword id="KW-0576">Peroxisome</keyword>
<keyword id="KW-0597">Phosphoprotein</keyword>
<keyword id="KW-1185">Reference proteome</keyword>
<keyword id="KW-0812">Transmembrane</keyword>
<keyword id="KW-1133">Transmembrane helix</keyword>
<keyword id="KW-0813">Transport</keyword>
<comment type="function">
    <text evidence="1">Acyl-CoA binding protein which acts as the peroxisome receptor for pexophagy but is dispensable for aggrephagy and nonselective autophagy. Binds medium- and long-chain acyl-CoA esters (By similarity).</text>
</comment>
<comment type="subcellular location">
    <subcellularLocation>
        <location evidence="1">Peroxisome membrane</location>
        <topology evidence="1">Single-pass membrane protein</topology>
    </subcellularLocation>
</comment>
<comment type="alternative products">
    <event type="alternative splicing"/>
    <isoform>
        <id>A0FKI7-1</id>
        <name>1</name>
        <sequence type="displayed"/>
    </isoform>
    <isoform>
        <id>A0FKI7-2</id>
        <name>2</name>
        <sequence type="described" ref="VSP_025454 VSP_025455"/>
    </isoform>
    <isoform>
        <id>A0FKI7-3</id>
        <name>3</name>
        <sequence type="described" ref="VSP_025455"/>
    </isoform>
</comment>
<comment type="similarity">
    <text evidence="9">Belongs to the ATG37 family.</text>
</comment>
<comment type="sequence caution" evidence="9">
    <conflict type="erroneous initiation">
        <sequence resource="EMBL-CDS" id="AAI01875"/>
    </conflict>
</comment>
<proteinExistence type="evidence at protein level"/>
<gene>
    <name type="primary">Acbd5</name>
</gene>
<evidence type="ECO:0000250" key="1"/>
<evidence type="ECO:0000250" key="2">
    <source>
        <dbReference type="UniProtKB" id="Q5T8D3"/>
    </source>
</evidence>
<evidence type="ECO:0000250" key="3">
    <source>
        <dbReference type="UniProtKB" id="Q5XG73"/>
    </source>
</evidence>
<evidence type="ECO:0000255" key="4"/>
<evidence type="ECO:0000255" key="5">
    <source>
        <dbReference type="PROSITE-ProRule" id="PRU00573"/>
    </source>
</evidence>
<evidence type="ECO:0000256" key="6">
    <source>
        <dbReference type="SAM" id="MobiDB-lite"/>
    </source>
</evidence>
<evidence type="ECO:0000303" key="7">
    <source>
    </source>
</evidence>
<evidence type="ECO:0000303" key="8">
    <source ref="1"/>
</evidence>
<evidence type="ECO:0000305" key="9"/>
<evidence type="ECO:0007744" key="10">
    <source>
    </source>
</evidence>
<accession>A0FKI7</accession>
<accession>A0FKI6</accession>
<accession>Q3T1K2</accession>
<organism>
    <name type="scientific">Rattus norvegicus</name>
    <name type="common">Rat</name>
    <dbReference type="NCBI Taxonomy" id="10116"/>
    <lineage>
        <taxon>Eukaryota</taxon>
        <taxon>Metazoa</taxon>
        <taxon>Chordata</taxon>
        <taxon>Craniata</taxon>
        <taxon>Vertebrata</taxon>
        <taxon>Euteleostomi</taxon>
        <taxon>Mammalia</taxon>
        <taxon>Eutheria</taxon>
        <taxon>Euarchontoglires</taxon>
        <taxon>Glires</taxon>
        <taxon>Rodentia</taxon>
        <taxon>Myomorpha</taxon>
        <taxon>Muroidea</taxon>
        <taxon>Muridae</taxon>
        <taxon>Murinae</taxon>
        <taxon>Rattus</taxon>
    </lineage>
</organism>
<dbReference type="EMBL" id="EF026991">
    <property type="protein sequence ID" value="ABK27611.1"/>
    <property type="molecule type" value="mRNA"/>
</dbReference>
<dbReference type="EMBL" id="EF026992">
    <property type="protein sequence ID" value="ABK27612.1"/>
    <property type="molecule type" value="mRNA"/>
</dbReference>
<dbReference type="EMBL" id="BC101874">
    <property type="protein sequence ID" value="AAI01875.1"/>
    <property type="status" value="ALT_INIT"/>
    <property type="molecule type" value="mRNA"/>
</dbReference>
<dbReference type="RefSeq" id="NP_001071103.1">
    <molecule id="A0FKI7-2"/>
    <property type="nucleotide sequence ID" value="NM_001077635.3"/>
</dbReference>
<dbReference type="RefSeq" id="NP_001386183.1">
    <molecule id="A0FKI7-3"/>
    <property type="nucleotide sequence ID" value="NM_001399254.1"/>
</dbReference>
<dbReference type="RefSeq" id="XP_006254406.1">
    <property type="nucleotide sequence ID" value="XM_006254344.1"/>
</dbReference>
<dbReference type="RefSeq" id="XP_006254407.1">
    <molecule id="A0FKI7-1"/>
    <property type="nucleotide sequence ID" value="XM_006254345.5"/>
</dbReference>
<dbReference type="SMR" id="A0FKI7"/>
<dbReference type="FunCoup" id="A0FKI7">
    <property type="interactions" value="2241"/>
</dbReference>
<dbReference type="STRING" id="10116.ENSRNOP00000072836"/>
<dbReference type="iPTMnet" id="A0FKI7"/>
<dbReference type="PhosphoSitePlus" id="A0FKI7"/>
<dbReference type="PaxDb" id="10116-ENSRNOP00000066254"/>
<dbReference type="PeptideAtlas" id="A0FKI7"/>
<dbReference type="Ensembl" id="ENSRNOT00000076964.2">
    <molecule id="A0FKI7-3"/>
    <property type="protein sequence ID" value="ENSRNOP00000068154.2"/>
    <property type="gene ID" value="ENSRNOG00000017642.9"/>
</dbReference>
<dbReference type="GeneID" id="307170"/>
<dbReference type="KEGG" id="rno:307170"/>
<dbReference type="UCSC" id="RGD:1309411">
    <molecule id="A0FKI7-1"/>
    <property type="organism name" value="rat"/>
</dbReference>
<dbReference type="AGR" id="RGD:1309411"/>
<dbReference type="CTD" id="91452"/>
<dbReference type="RGD" id="1309411">
    <property type="gene designation" value="Acbd5"/>
</dbReference>
<dbReference type="eggNOG" id="KOG0817">
    <property type="taxonomic scope" value="Eukaryota"/>
</dbReference>
<dbReference type="GeneTree" id="ENSGT00940000156350"/>
<dbReference type="InParanoid" id="A0FKI7"/>
<dbReference type="OrthoDB" id="71307at2759"/>
<dbReference type="PhylomeDB" id="A0FKI7"/>
<dbReference type="Reactome" id="R-RNO-390918">
    <property type="pathway name" value="Peroxisomal lipid metabolism"/>
</dbReference>
<dbReference type="Reactome" id="R-RNO-8980692">
    <property type="pathway name" value="RHOA GTPase cycle"/>
</dbReference>
<dbReference type="Reactome" id="R-RNO-9603798">
    <property type="pathway name" value="Class I peroxisomal membrane protein import"/>
</dbReference>
<dbReference type="PRO" id="PR:A0FKI7"/>
<dbReference type="Proteomes" id="UP000002494">
    <property type="component" value="Chromosome 17"/>
</dbReference>
<dbReference type="GO" id="GO:0005737">
    <property type="term" value="C:cytoplasm"/>
    <property type="evidence" value="ECO:0000318"/>
    <property type="project" value="GO_Central"/>
</dbReference>
<dbReference type="GO" id="GO:0005778">
    <property type="term" value="C:peroxisomal membrane"/>
    <property type="evidence" value="ECO:0007669"/>
    <property type="project" value="UniProtKB-SubCell"/>
</dbReference>
<dbReference type="GO" id="GO:0005777">
    <property type="term" value="C:peroxisome"/>
    <property type="evidence" value="ECO:0000266"/>
    <property type="project" value="RGD"/>
</dbReference>
<dbReference type="GO" id="GO:0000062">
    <property type="term" value="F:fatty-acyl-CoA binding"/>
    <property type="evidence" value="ECO:0000318"/>
    <property type="project" value="GO_Central"/>
</dbReference>
<dbReference type="GO" id="GO:0006631">
    <property type="term" value="P:fatty acid metabolic process"/>
    <property type="evidence" value="ECO:0000318"/>
    <property type="project" value="GO_Central"/>
</dbReference>
<dbReference type="GO" id="GO:0000425">
    <property type="term" value="P:pexophagy"/>
    <property type="evidence" value="ECO:0000266"/>
    <property type="project" value="RGD"/>
</dbReference>
<dbReference type="CDD" id="cd00435">
    <property type="entry name" value="ACBP"/>
    <property type="match status" value="1"/>
</dbReference>
<dbReference type="FunFam" id="1.20.80.10:FF:000010">
    <property type="entry name" value="Acyl-CoA-binding domain-containing protein 5"/>
    <property type="match status" value="1"/>
</dbReference>
<dbReference type="Gene3D" id="1.20.80.10">
    <property type="match status" value="1"/>
</dbReference>
<dbReference type="InterPro" id="IPR016347">
    <property type="entry name" value="ACBD5"/>
</dbReference>
<dbReference type="InterPro" id="IPR022408">
    <property type="entry name" value="Acyl-CoA-binding_prot_CS"/>
</dbReference>
<dbReference type="InterPro" id="IPR000582">
    <property type="entry name" value="Acyl-CoA-binding_protein"/>
</dbReference>
<dbReference type="InterPro" id="IPR035984">
    <property type="entry name" value="Acyl-CoA-binding_sf"/>
</dbReference>
<dbReference type="InterPro" id="IPR014352">
    <property type="entry name" value="FERM/acyl-CoA-bd_prot_sf"/>
</dbReference>
<dbReference type="PANTHER" id="PTHR23310:SF6">
    <property type="entry name" value="ACYL-COA-BINDING DOMAIN-CONTAINING PROTEIN 5"/>
    <property type="match status" value="1"/>
</dbReference>
<dbReference type="PANTHER" id="PTHR23310">
    <property type="entry name" value="ACYL-COA-BINDING PROTEIN, ACBP"/>
    <property type="match status" value="1"/>
</dbReference>
<dbReference type="Pfam" id="PF00887">
    <property type="entry name" value="ACBP"/>
    <property type="match status" value="1"/>
</dbReference>
<dbReference type="PIRSF" id="PIRSF002412">
    <property type="entry name" value="MA_DBI"/>
    <property type="match status" value="1"/>
</dbReference>
<dbReference type="PRINTS" id="PR00689">
    <property type="entry name" value="ACOABINDINGP"/>
</dbReference>
<dbReference type="SUPFAM" id="SSF47027">
    <property type="entry name" value="Acyl-CoA binding protein"/>
    <property type="match status" value="1"/>
</dbReference>
<dbReference type="PROSITE" id="PS00880">
    <property type="entry name" value="ACB_1"/>
    <property type="match status" value="1"/>
</dbReference>
<dbReference type="PROSITE" id="PS51228">
    <property type="entry name" value="ACB_2"/>
    <property type="match status" value="1"/>
</dbReference>